<name>PSAC_HORVU</name>
<proteinExistence type="evidence at protein level"/>
<accession>P69416</accession>
<accession>A1E9P1</accession>
<accession>P10794</accession>
<organism>
    <name type="scientific">Hordeum vulgare</name>
    <name type="common">Barley</name>
    <dbReference type="NCBI Taxonomy" id="4513"/>
    <lineage>
        <taxon>Eukaryota</taxon>
        <taxon>Viridiplantae</taxon>
        <taxon>Streptophyta</taxon>
        <taxon>Embryophyta</taxon>
        <taxon>Tracheophyta</taxon>
        <taxon>Spermatophyta</taxon>
        <taxon>Magnoliopsida</taxon>
        <taxon>Liliopsida</taxon>
        <taxon>Poales</taxon>
        <taxon>Poaceae</taxon>
        <taxon>BOP clade</taxon>
        <taxon>Pooideae</taxon>
        <taxon>Triticodae</taxon>
        <taxon>Triticeae</taxon>
        <taxon>Hordeinae</taxon>
        <taxon>Hordeum</taxon>
    </lineage>
</organism>
<geneLocation type="chloroplast"/>
<sequence>MSHSVKIYDTCIGCTQCVRACPTDVLEMIPWDGCKAKQIASAPRTEDCVGCKRCESACPTDFLSVRVYLGPETTRSMALSY</sequence>
<keyword id="KW-0002">3D-structure</keyword>
<keyword id="KW-0004">4Fe-4S</keyword>
<keyword id="KW-0150">Chloroplast</keyword>
<keyword id="KW-0903">Direct protein sequencing</keyword>
<keyword id="KW-0249">Electron transport</keyword>
<keyword id="KW-0408">Iron</keyword>
<keyword id="KW-0411">Iron-sulfur</keyword>
<keyword id="KW-0472">Membrane</keyword>
<keyword id="KW-0479">Metal-binding</keyword>
<keyword id="KW-0560">Oxidoreductase</keyword>
<keyword id="KW-0602">Photosynthesis</keyword>
<keyword id="KW-0603">Photosystem I</keyword>
<keyword id="KW-0934">Plastid</keyword>
<keyword id="KW-0677">Repeat</keyword>
<keyword id="KW-0793">Thylakoid</keyword>
<keyword id="KW-0813">Transport</keyword>
<dbReference type="EC" id="1.97.1.12"/>
<dbReference type="EMBL" id="L06607">
    <property type="protein sequence ID" value="AAA32953.1"/>
    <property type="molecule type" value="Genomic_DNA"/>
</dbReference>
<dbReference type="EMBL" id="AJ011848">
    <property type="protein sequence ID" value="CAA09816.1"/>
    <property type="molecule type" value="Genomic_DNA"/>
</dbReference>
<dbReference type="EMBL" id="EF137813">
    <property type="protein sequence ID" value="ABL95204.1"/>
    <property type="molecule type" value="Genomic_DNA"/>
</dbReference>
<dbReference type="EMBL" id="EF115541">
    <property type="protein sequence ID" value="ABK79463.1"/>
    <property type="molecule type" value="Genomic_DNA"/>
</dbReference>
<dbReference type="PIR" id="A27375">
    <property type="entry name" value="A27375"/>
</dbReference>
<dbReference type="PIR" id="A32364">
    <property type="entry name" value="A32364"/>
</dbReference>
<dbReference type="RefSeq" id="YP_010144476.1">
    <property type="nucleotide sequence ID" value="NC_056985.1"/>
</dbReference>
<dbReference type="RefSeq" id="YP_874703.1">
    <property type="nucleotide sequence ID" value="NC_008590.1"/>
</dbReference>
<dbReference type="PDB" id="7EW6">
    <property type="method" value="EM"/>
    <property type="resolution" value="3.40 A"/>
    <property type="chains" value="C=1-81"/>
</dbReference>
<dbReference type="PDB" id="7EWK">
    <property type="method" value="EM"/>
    <property type="resolution" value="3.88 A"/>
    <property type="chains" value="C=1-81"/>
</dbReference>
<dbReference type="PDBsum" id="7EW6"/>
<dbReference type="PDBsum" id="7EWK"/>
<dbReference type="EMDB" id="EMD-31350"/>
<dbReference type="SMR" id="P69416"/>
<dbReference type="GeneID" id="4525168"/>
<dbReference type="GeneID" id="67140632"/>
<dbReference type="OMA" id="RDGCKAN"/>
<dbReference type="GO" id="GO:0009535">
    <property type="term" value="C:chloroplast thylakoid membrane"/>
    <property type="evidence" value="ECO:0007669"/>
    <property type="project" value="UniProtKB-SubCell"/>
</dbReference>
<dbReference type="GO" id="GO:0009522">
    <property type="term" value="C:photosystem I"/>
    <property type="evidence" value="ECO:0007669"/>
    <property type="project" value="UniProtKB-KW"/>
</dbReference>
<dbReference type="GO" id="GO:0051539">
    <property type="term" value="F:4 iron, 4 sulfur cluster binding"/>
    <property type="evidence" value="ECO:0007669"/>
    <property type="project" value="UniProtKB-KW"/>
</dbReference>
<dbReference type="GO" id="GO:0009055">
    <property type="term" value="F:electron transfer activity"/>
    <property type="evidence" value="ECO:0007669"/>
    <property type="project" value="UniProtKB-UniRule"/>
</dbReference>
<dbReference type="GO" id="GO:0046872">
    <property type="term" value="F:metal ion binding"/>
    <property type="evidence" value="ECO:0007669"/>
    <property type="project" value="UniProtKB-KW"/>
</dbReference>
<dbReference type="GO" id="GO:0016491">
    <property type="term" value="F:oxidoreductase activity"/>
    <property type="evidence" value="ECO:0007669"/>
    <property type="project" value="UniProtKB-KW"/>
</dbReference>
<dbReference type="GO" id="GO:0009773">
    <property type="term" value="P:photosynthetic electron transport in photosystem I"/>
    <property type="evidence" value="ECO:0007669"/>
    <property type="project" value="InterPro"/>
</dbReference>
<dbReference type="FunFam" id="3.30.70.20:FF:000001">
    <property type="entry name" value="Photosystem I iron-sulfur center"/>
    <property type="match status" value="1"/>
</dbReference>
<dbReference type="Gene3D" id="3.30.70.20">
    <property type="match status" value="1"/>
</dbReference>
<dbReference type="HAMAP" id="MF_01303">
    <property type="entry name" value="PSI_PsaC"/>
    <property type="match status" value="1"/>
</dbReference>
<dbReference type="InterPro" id="IPR017896">
    <property type="entry name" value="4Fe4S_Fe-S-bd"/>
</dbReference>
<dbReference type="InterPro" id="IPR017900">
    <property type="entry name" value="4Fe4S_Fe_S_CS"/>
</dbReference>
<dbReference type="InterPro" id="IPR050157">
    <property type="entry name" value="PSI_iron-sulfur_center"/>
</dbReference>
<dbReference type="InterPro" id="IPR017491">
    <property type="entry name" value="PSI_PsaC"/>
</dbReference>
<dbReference type="NCBIfam" id="TIGR03048">
    <property type="entry name" value="PS_I_psaC"/>
    <property type="match status" value="1"/>
</dbReference>
<dbReference type="PANTHER" id="PTHR24960:SF79">
    <property type="entry name" value="PHOTOSYSTEM I IRON-SULFUR CENTER"/>
    <property type="match status" value="1"/>
</dbReference>
<dbReference type="PANTHER" id="PTHR24960">
    <property type="entry name" value="PHOTOSYSTEM I IRON-SULFUR CENTER-RELATED"/>
    <property type="match status" value="1"/>
</dbReference>
<dbReference type="Pfam" id="PF12838">
    <property type="entry name" value="Fer4_7"/>
    <property type="match status" value="1"/>
</dbReference>
<dbReference type="SUPFAM" id="SSF54862">
    <property type="entry name" value="4Fe-4S ferredoxins"/>
    <property type="match status" value="1"/>
</dbReference>
<dbReference type="PROSITE" id="PS00198">
    <property type="entry name" value="4FE4S_FER_1"/>
    <property type="match status" value="2"/>
</dbReference>
<dbReference type="PROSITE" id="PS51379">
    <property type="entry name" value="4FE4S_FER_2"/>
    <property type="match status" value="2"/>
</dbReference>
<feature type="initiator methionine" description="Removed" evidence="2 3">
    <location>
        <position position="1"/>
    </location>
</feature>
<feature type="chain" id="PRO_0000061984" description="Photosystem I iron-sulfur center">
    <location>
        <begin position="2"/>
        <end position="81"/>
    </location>
</feature>
<feature type="domain" description="4Fe-4S ferredoxin-type 1">
    <location>
        <begin position="2"/>
        <end position="31"/>
    </location>
</feature>
<feature type="domain" description="4Fe-4S ferredoxin-type 2">
    <location>
        <begin position="39"/>
        <end position="68"/>
    </location>
</feature>
<feature type="binding site" evidence="1">
    <location>
        <position position="11"/>
    </location>
    <ligand>
        <name>[4Fe-4S] cluster</name>
        <dbReference type="ChEBI" id="CHEBI:49883"/>
        <label>1</label>
    </ligand>
</feature>
<feature type="binding site" evidence="1">
    <location>
        <position position="14"/>
    </location>
    <ligand>
        <name>[4Fe-4S] cluster</name>
        <dbReference type="ChEBI" id="CHEBI:49883"/>
        <label>1</label>
    </ligand>
</feature>
<feature type="binding site" evidence="1">
    <location>
        <position position="17"/>
    </location>
    <ligand>
        <name>[4Fe-4S] cluster</name>
        <dbReference type="ChEBI" id="CHEBI:49883"/>
        <label>1</label>
    </ligand>
</feature>
<feature type="binding site" evidence="1">
    <location>
        <position position="21"/>
    </location>
    <ligand>
        <name>[4Fe-4S] cluster</name>
        <dbReference type="ChEBI" id="CHEBI:49883"/>
        <label>2</label>
    </ligand>
</feature>
<feature type="binding site" evidence="1">
    <location>
        <position position="48"/>
    </location>
    <ligand>
        <name>[4Fe-4S] cluster</name>
        <dbReference type="ChEBI" id="CHEBI:49883"/>
        <label>2</label>
    </ligand>
</feature>
<feature type="binding site" evidence="1">
    <location>
        <position position="51"/>
    </location>
    <ligand>
        <name>[4Fe-4S] cluster</name>
        <dbReference type="ChEBI" id="CHEBI:49883"/>
        <label>2</label>
    </ligand>
</feature>
<feature type="binding site" evidence="1">
    <location>
        <position position="54"/>
    </location>
    <ligand>
        <name>[4Fe-4S] cluster</name>
        <dbReference type="ChEBI" id="CHEBI:49883"/>
        <label>2</label>
    </ligand>
</feature>
<feature type="binding site" evidence="1">
    <location>
        <position position="58"/>
    </location>
    <ligand>
        <name>[4Fe-4S] cluster</name>
        <dbReference type="ChEBI" id="CHEBI:49883"/>
        <label>1</label>
    </ligand>
</feature>
<feature type="mutagenesis site" description="In vitro PSI-C is unstably assembled into PSI cores in presence of PSI-D, and not at all in its absence. In vitro PSI-C is unable to bind to PSI cores even in the presence of PSI-D; when associated with 67-Y--Y-80 deleted." evidence="4 5">
    <location>
        <begin position="27"/>
        <end position="34"/>
    </location>
</feature>
<feature type="mutagenesis site" description="Removes residues 26-33 and reinserts them at the C-terminus. In vitro the atypical presence of residues 26-33 re-enables the protein to assemble into PSI cores even in the absence of PSI-D." evidence="5">
    <original>YLGPETTRSMALSY</original>
    <variation>EMIPWDGC</variation>
    <location>
        <begin position="68"/>
        <end position="81"/>
    </location>
</feature>
<feature type="mutagenesis site" description="In vitro PSI-C is unable to bind to PSI cores even in the presence of PSI-D; when associated with 27-E--C-34." evidence="5">
    <location>
        <begin position="68"/>
        <end position="81"/>
    </location>
</feature>
<feature type="strand" evidence="6">
    <location>
        <begin position="3"/>
        <end position="7"/>
    </location>
</feature>
<feature type="helix" evidence="6">
    <location>
        <begin position="18"/>
        <end position="20"/>
    </location>
</feature>
<feature type="strand" evidence="6">
    <location>
        <begin position="27"/>
        <end position="30"/>
    </location>
</feature>
<feature type="strand" evidence="6">
    <location>
        <begin position="32"/>
        <end position="36"/>
    </location>
</feature>
<feature type="strand" evidence="6">
    <location>
        <begin position="38"/>
        <end position="41"/>
    </location>
</feature>
<feature type="helix" evidence="6">
    <location>
        <begin position="45"/>
        <end position="47"/>
    </location>
</feature>
<feature type="helix" evidence="6">
    <location>
        <begin position="52"/>
        <end position="54"/>
    </location>
</feature>
<feature type="strand" evidence="6">
    <location>
        <begin position="60"/>
        <end position="62"/>
    </location>
</feature>
<feature type="strand" evidence="6">
    <location>
        <begin position="64"/>
        <end position="68"/>
    </location>
</feature>
<feature type="turn" evidence="6">
    <location>
        <begin position="74"/>
        <end position="78"/>
    </location>
</feature>
<protein>
    <recommendedName>
        <fullName>Photosystem I iron-sulfur center</fullName>
        <ecNumber>1.97.1.12</ecNumber>
    </recommendedName>
    <alternativeName>
        <fullName>9 kDa polypeptide</fullName>
    </alternativeName>
    <alternativeName>
        <fullName>PSI-C</fullName>
    </alternativeName>
    <alternativeName>
        <fullName>Photosystem I subunit VII</fullName>
    </alternativeName>
    <alternativeName>
        <fullName>PsaC</fullName>
    </alternativeName>
</protein>
<evidence type="ECO:0000250" key="1"/>
<evidence type="ECO:0000269" key="2">
    <source>
    </source>
</evidence>
<evidence type="ECO:0000269" key="3">
    <source>
    </source>
</evidence>
<evidence type="ECO:0000269" key="4">
    <source>
    </source>
</evidence>
<evidence type="ECO:0000269" key="5">
    <source>
    </source>
</evidence>
<evidence type="ECO:0007829" key="6">
    <source>
        <dbReference type="PDB" id="7EW6"/>
    </source>
</evidence>
<gene>
    <name type="primary">psaC</name>
</gene>
<reference key="1">
    <citation type="submission" date="1992-11" db="EMBL/GenBank/DDBJ databases">
        <title>A barley chloroplast clone encoding psaC and part of ndhD: RNA editing of the ndhD initiation codon in barley?</title>
        <authorList>
            <person name="Okkels J.S."/>
            <person name="Moeller B.L."/>
        </authorList>
    </citation>
    <scope>NUCLEOTIDE SEQUENCE [GENOMIC DNA]</scope>
    <source>
        <strain>cv. Svalofs Bonus</strain>
    </source>
</reference>
<reference key="2">
    <citation type="journal article" date="2000" name="Nucleic Acids Res.">
        <title>Transcripts of the ndhH-D operon of barley plastids: possible role of unedited site III in splicing of the ndhA intron.</title>
        <authorList>
            <person name="del Campo E.M."/>
            <person name="Sabater B."/>
            <person name="Martin M."/>
        </authorList>
    </citation>
    <scope>NUCLEOTIDE SEQUENCE [GENOMIC DNA]</scope>
    <source>
        <strain>cv. Hassan</strain>
        <tissue>Leaf</tissue>
    </source>
</reference>
<reference key="3">
    <citation type="submission" date="2006-11" db="EMBL/GenBank/DDBJ databases">
        <title>Sequence variation of chloroplast psaC gene region occurred in some triticeae species.</title>
        <authorList>
            <person name="Ning S."/>
            <person name="Chen Q."/>
            <person name="Yuan Z."/>
            <person name="Zhang L."/>
            <person name="Liu D."/>
        </authorList>
    </citation>
    <scope>NUCLEOTIDE SEQUENCE [GENOMIC DNA]</scope>
</reference>
<reference key="4">
    <citation type="journal article" date="2007" name="Theor. Appl. Genet.">
        <title>Complete chloroplast genome sequences of Hordeum vulgare, Sorghum bicolor and Agrostis stolonifera, and comparative analyses with other grass genomes.</title>
        <authorList>
            <person name="Saski C."/>
            <person name="Lee S.-B."/>
            <person name="Fjellheim S."/>
            <person name="Guda C."/>
            <person name="Jansen R.K."/>
            <person name="Luo H."/>
            <person name="Tomkins J."/>
            <person name="Rognli O.A."/>
            <person name="Daniell H."/>
            <person name="Clarke J.L."/>
        </authorList>
    </citation>
    <scope>NUCLEOTIDE SEQUENCE [LARGE SCALE GENOMIC DNA]</scope>
    <source>
        <strain>cv. Morex</strain>
    </source>
</reference>
<reference key="5">
    <citation type="journal article" date="1989" name="Carlsberg Res. Commun.">
        <title>Amino acid sequence of the 9-kDa iron-sulfur protein of photosystem I in barley.</title>
        <authorList>
            <person name="Scheller H.V."/>
            <person name="Svendsen I."/>
            <person name="Moeller B.L."/>
        </authorList>
    </citation>
    <scope>PROTEIN SEQUENCE OF 2-81</scope>
</reference>
<reference key="6">
    <citation type="journal article" date="1987" name="J. Biol. Chem.">
        <title>Identification of a chloroplast-encoded 9-kDa polypeptide as a 2[4Fe-4S] protein carrying centers A and B of photosystem I.</title>
        <authorList>
            <person name="Hoej P.B."/>
            <person name="Svendsen I."/>
            <person name="Scheller H.V."/>
            <person name="Moeller B.L."/>
        </authorList>
    </citation>
    <scope>PROTEIN SEQUENCE OF 2-30</scope>
</reference>
<reference key="7">
    <citation type="journal article" date="1996" name="J. Biol. Chem.">
        <title>Reconstitution of barley photosystem I with modified PSI-C allows identification of domains interacting with PSI-D and PSI-A/B.</title>
        <authorList>
            <person name="Naver H."/>
            <person name="Scott M.P."/>
            <person name="Golbeck J.H."/>
            <person name="Moeller B.L."/>
            <person name="Scheller H.V."/>
        </authorList>
    </citation>
    <scope>MUTAGENESIS OF 27-GLU--CYS-34</scope>
</reference>
<reference key="8">
    <citation type="journal article" date="1998" name="J. Biol. Chem.">
        <title>The eight-amino acid internal loop of PSI-C mediates association of low molecular mass iron-sulfur proteins with the P700-FX core in photosystem I.</title>
        <authorList>
            <person name="Naver H."/>
            <person name="Scott M.P."/>
            <person name="Golbeck J.H."/>
            <person name="Olsen C.E."/>
            <person name="Scheller H.V."/>
        </authorList>
    </citation>
    <scope>MUTAGENESIS OF 27-GLU--CYS-34 AND 68-TYR--TYR-81</scope>
    <source>
        <strain>cv. Svalofs Bonus</strain>
    </source>
</reference>
<comment type="function">
    <text>Apoprotein for the two 4Fe-4S centers FA and FB of photosystem I (PSI); essential for photochemical activity. FB is the terminal electron acceptor of PSI, donating electrons to ferredoxin. The C-terminus interacts with PsaA/B/D and helps assemble the protein into the PSI complex. Required for binding of PsaD and PsaE to PSI. PSI is a plastocyanin-ferredoxin oxidoreductase, converting photonic excitation into a charge separation, which transfers an electron from the donor P700 chlorophyll pair to the spectroscopically characterized acceptors A0, A1, FX, FA and FB in turn.</text>
</comment>
<comment type="catalytic activity">
    <reaction>
        <text>reduced [plastocyanin] + hnu + oxidized [2Fe-2S]-[ferredoxin] = oxidized [plastocyanin] + reduced [2Fe-2S]-[ferredoxin]</text>
        <dbReference type="Rhea" id="RHEA:30407"/>
        <dbReference type="Rhea" id="RHEA-COMP:10000"/>
        <dbReference type="Rhea" id="RHEA-COMP:10001"/>
        <dbReference type="Rhea" id="RHEA-COMP:10039"/>
        <dbReference type="Rhea" id="RHEA-COMP:10040"/>
        <dbReference type="ChEBI" id="CHEBI:29036"/>
        <dbReference type="ChEBI" id="CHEBI:30212"/>
        <dbReference type="ChEBI" id="CHEBI:33737"/>
        <dbReference type="ChEBI" id="CHEBI:33738"/>
        <dbReference type="ChEBI" id="CHEBI:49552"/>
        <dbReference type="EC" id="1.97.1.12"/>
    </reaction>
</comment>
<comment type="cofactor">
    <cofactor evidence="1">
        <name>[4Fe-4S] cluster</name>
        <dbReference type="ChEBI" id="CHEBI:49883"/>
    </cofactor>
    <text evidence="1">Binds 2 [4Fe-4S] clusters. Cluster 2 is most probably the spectroscopically characterized electron acceptor FA and cluster 1 is most probably FB.</text>
</comment>
<comment type="subunit">
    <text evidence="1">The eukaryotic PSI reaction center is composed of at least 11 subunits.</text>
</comment>
<comment type="subcellular location">
    <subcellularLocation>
        <location evidence="1">Plastid</location>
        <location evidence="1">Chloroplast thylakoid membrane</location>
        <topology evidence="1">Peripheral membrane protein</topology>
        <orientation evidence="1">Stromal side</orientation>
    </subcellularLocation>
</comment>